<evidence type="ECO:0000255" key="1">
    <source>
        <dbReference type="HAMAP-Rule" id="MF_01576"/>
    </source>
</evidence>
<organism>
    <name type="scientific">Chromobacterium violaceum (strain ATCC 12472 / DSM 30191 / JCM 1249 / CCUG 213 / NBRC 12614 / NCIMB 9131 / NCTC 9757 / MK)</name>
    <dbReference type="NCBI Taxonomy" id="243365"/>
    <lineage>
        <taxon>Bacteria</taxon>
        <taxon>Pseudomonadati</taxon>
        <taxon>Pseudomonadota</taxon>
        <taxon>Betaproteobacteria</taxon>
        <taxon>Neisseriales</taxon>
        <taxon>Chromobacteriaceae</taxon>
        <taxon>Chromobacterium</taxon>
    </lineage>
</organism>
<reference key="1">
    <citation type="journal article" date="2003" name="Proc. Natl. Acad. Sci. U.S.A.">
        <title>The complete genome sequence of Chromobacterium violaceum reveals remarkable and exploitable bacterial adaptability.</title>
        <authorList>
            <person name="Vasconcelos A.T.R."/>
            <person name="de Almeida D.F."/>
            <person name="Hungria M."/>
            <person name="Guimaraes C.T."/>
            <person name="Antonio R.V."/>
            <person name="Almeida F.C."/>
            <person name="de Almeida L.G.P."/>
            <person name="de Almeida R."/>
            <person name="Alves-Gomes J.A."/>
            <person name="Andrade E.M."/>
            <person name="Araripe J."/>
            <person name="de Araujo M.F.F."/>
            <person name="Astolfi-Filho S."/>
            <person name="Azevedo V."/>
            <person name="Baptista A.J."/>
            <person name="Bataus L.A.M."/>
            <person name="Batista J.S."/>
            <person name="Belo A."/>
            <person name="van den Berg C."/>
            <person name="Bogo M."/>
            <person name="Bonatto S."/>
            <person name="Bordignon J."/>
            <person name="Brigido M.M."/>
            <person name="Brito C.A."/>
            <person name="Brocchi M."/>
            <person name="Burity H.A."/>
            <person name="Camargo A.A."/>
            <person name="Cardoso D.D.P."/>
            <person name="Carneiro N.P."/>
            <person name="Carraro D.M."/>
            <person name="Carvalho C.M.B."/>
            <person name="Cascardo J.C.M."/>
            <person name="Cavada B.S."/>
            <person name="Chueire L.M.O."/>
            <person name="Creczynski-Pasa T.B."/>
            <person name="Cunha-Junior N.C."/>
            <person name="Fagundes N."/>
            <person name="Falcao C.L."/>
            <person name="Fantinatti F."/>
            <person name="Farias I.P."/>
            <person name="Felipe M.S.S."/>
            <person name="Ferrari L.P."/>
            <person name="Ferro J.A."/>
            <person name="Ferro M.I.T."/>
            <person name="Franco G.R."/>
            <person name="Freitas N.S.A."/>
            <person name="Furlan L.R."/>
            <person name="Gazzinelli R.T."/>
            <person name="Gomes E.A."/>
            <person name="Goncalves P.R."/>
            <person name="Grangeiro T.B."/>
            <person name="Grattapaglia D."/>
            <person name="Grisard E.C."/>
            <person name="Hanna E.S."/>
            <person name="Jardim S.N."/>
            <person name="Laurino J."/>
            <person name="Leoi L.C.T."/>
            <person name="Lima L.F.A."/>
            <person name="Loureiro M.F."/>
            <person name="Lyra M.C.C.P."/>
            <person name="Madeira H.M.F."/>
            <person name="Manfio G.P."/>
            <person name="Maranhao A.Q."/>
            <person name="Martins W.S."/>
            <person name="di Mauro S.M.Z."/>
            <person name="de Medeiros S.R.B."/>
            <person name="Meissner R.V."/>
            <person name="Moreira M.A.M."/>
            <person name="Nascimento F.F."/>
            <person name="Nicolas M.F."/>
            <person name="Oliveira J.G."/>
            <person name="Oliveira S.C."/>
            <person name="Paixao R.F.C."/>
            <person name="Parente J.A."/>
            <person name="Pedrosa F.O."/>
            <person name="Pena S.D.J."/>
            <person name="Pereira J.O."/>
            <person name="Pereira M."/>
            <person name="Pinto L.S.R.C."/>
            <person name="Pinto L.S."/>
            <person name="Porto J.I.R."/>
            <person name="Potrich D.P."/>
            <person name="Ramalho-Neto C.E."/>
            <person name="Reis A.M.M."/>
            <person name="Rigo L.U."/>
            <person name="Rondinelli E."/>
            <person name="Santos E.B.P."/>
            <person name="Santos F.R."/>
            <person name="Schneider M.P.C."/>
            <person name="Seuanez H.N."/>
            <person name="Silva A.M.R."/>
            <person name="da Silva A.L.C."/>
            <person name="Silva D.W."/>
            <person name="Silva R."/>
            <person name="Simoes I.C."/>
            <person name="Simon D."/>
            <person name="Soares C.M.A."/>
            <person name="Soares R.B.A."/>
            <person name="Souza E.M."/>
            <person name="Souza K.R.L."/>
            <person name="Souza R.C."/>
            <person name="Steffens M.B.R."/>
            <person name="Steindel M."/>
            <person name="Teixeira S.R."/>
            <person name="Urmenyi T."/>
            <person name="Vettore A."/>
            <person name="Wassem R."/>
            <person name="Zaha A."/>
            <person name="Simpson A.J.G."/>
        </authorList>
    </citation>
    <scope>NUCLEOTIDE SEQUENCE [LARGE SCALE GENOMIC DNA]</scope>
    <source>
        <strain>ATCC 12472 / DSM 30191 / JCM 1249 / CCUG 213 / NBRC 12614 / NCIMB 9131 / NCTC 9757 / MK</strain>
    </source>
</reference>
<proteinExistence type="inferred from homology"/>
<comment type="function">
    <text evidence="1">Catalyzes the oxidation of 5,10-methylenetetrahydrofolate to 5,10-methenyltetrahydrofolate and then the hydrolysis of 5,10-methenyltetrahydrofolate to 10-formyltetrahydrofolate.</text>
</comment>
<comment type="catalytic activity">
    <reaction evidence="1">
        <text>(6R)-5,10-methylene-5,6,7,8-tetrahydrofolate + NADP(+) = (6R)-5,10-methenyltetrahydrofolate + NADPH</text>
        <dbReference type="Rhea" id="RHEA:22812"/>
        <dbReference type="ChEBI" id="CHEBI:15636"/>
        <dbReference type="ChEBI" id="CHEBI:57455"/>
        <dbReference type="ChEBI" id="CHEBI:57783"/>
        <dbReference type="ChEBI" id="CHEBI:58349"/>
        <dbReference type="EC" id="1.5.1.5"/>
    </reaction>
</comment>
<comment type="catalytic activity">
    <reaction evidence="1">
        <text>(6R)-5,10-methenyltetrahydrofolate + H2O = (6R)-10-formyltetrahydrofolate + H(+)</text>
        <dbReference type="Rhea" id="RHEA:23700"/>
        <dbReference type="ChEBI" id="CHEBI:15377"/>
        <dbReference type="ChEBI" id="CHEBI:15378"/>
        <dbReference type="ChEBI" id="CHEBI:57455"/>
        <dbReference type="ChEBI" id="CHEBI:195366"/>
        <dbReference type="EC" id="3.5.4.9"/>
    </reaction>
</comment>
<comment type="pathway">
    <text evidence="1">One-carbon metabolism; tetrahydrofolate interconversion.</text>
</comment>
<comment type="subunit">
    <text evidence="1">Homodimer.</text>
</comment>
<comment type="similarity">
    <text evidence="1">Belongs to the tetrahydrofolate dehydrogenase/cyclohydrolase family.</text>
</comment>
<gene>
    <name evidence="1" type="primary">folD</name>
    <name type="ordered locus">CV_1925</name>
</gene>
<keyword id="KW-0028">Amino-acid biosynthesis</keyword>
<keyword id="KW-0368">Histidine biosynthesis</keyword>
<keyword id="KW-0378">Hydrolase</keyword>
<keyword id="KW-0486">Methionine biosynthesis</keyword>
<keyword id="KW-0511">Multifunctional enzyme</keyword>
<keyword id="KW-0521">NADP</keyword>
<keyword id="KW-0554">One-carbon metabolism</keyword>
<keyword id="KW-0560">Oxidoreductase</keyword>
<keyword id="KW-0658">Purine biosynthesis</keyword>
<keyword id="KW-1185">Reference proteome</keyword>
<accession>Q7NWQ6</accession>
<dbReference type="EC" id="1.5.1.5" evidence="1"/>
<dbReference type="EC" id="3.5.4.9" evidence="1"/>
<dbReference type="EMBL" id="AE016825">
    <property type="protein sequence ID" value="AAQ59599.1"/>
    <property type="molecule type" value="Genomic_DNA"/>
</dbReference>
<dbReference type="RefSeq" id="WP_011135476.1">
    <property type="nucleotide sequence ID" value="NC_005085.1"/>
</dbReference>
<dbReference type="SMR" id="Q7NWQ6"/>
<dbReference type="STRING" id="243365.CV_1925"/>
<dbReference type="KEGG" id="cvi:CV_1925"/>
<dbReference type="eggNOG" id="COG0190">
    <property type="taxonomic scope" value="Bacteria"/>
</dbReference>
<dbReference type="HOGENOM" id="CLU_034045_2_1_4"/>
<dbReference type="OrthoDB" id="9803580at2"/>
<dbReference type="UniPathway" id="UPA00193"/>
<dbReference type="Proteomes" id="UP000001424">
    <property type="component" value="Chromosome"/>
</dbReference>
<dbReference type="GO" id="GO:0005829">
    <property type="term" value="C:cytosol"/>
    <property type="evidence" value="ECO:0007669"/>
    <property type="project" value="TreeGrafter"/>
</dbReference>
<dbReference type="GO" id="GO:0004477">
    <property type="term" value="F:methenyltetrahydrofolate cyclohydrolase activity"/>
    <property type="evidence" value="ECO:0007669"/>
    <property type="project" value="UniProtKB-UniRule"/>
</dbReference>
<dbReference type="GO" id="GO:0004488">
    <property type="term" value="F:methylenetetrahydrofolate dehydrogenase (NADP+) activity"/>
    <property type="evidence" value="ECO:0007669"/>
    <property type="project" value="UniProtKB-UniRule"/>
</dbReference>
<dbReference type="GO" id="GO:0000105">
    <property type="term" value="P:L-histidine biosynthetic process"/>
    <property type="evidence" value="ECO:0007669"/>
    <property type="project" value="UniProtKB-KW"/>
</dbReference>
<dbReference type="GO" id="GO:0009086">
    <property type="term" value="P:methionine biosynthetic process"/>
    <property type="evidence" value="ECO:0007669"/>
    <property type="project" value="UniProtKB-KW"/>
</dbReference>
<dbReference type="GO" id="GO:0006164">
    <property type="term" value="P:purine nucleotide biosynthetic process"/>
    <property type="evidence" value="ECO:0007669"/>
    <property type="project" value="UniProtKB-KW"/>
</dbReference>
<dbReference type="GO" id="GO:0035999">
    <property type="term" value="P:tetrahydrofolate interconversion"/>
    <property type="evidence" value="ECO:0007669"/>
    <property type="project" value="UniProtKB-UniRule"/>
</dbReference>
<dbReference type="CDD" id="cd01080">
    <property type="entry name" value="NAD_bind_m-THF_DH_Cyclohyd"/>
    <property type="match status" value="1"/>
</dbReference>
<dbReference type="FunFam" id="3.40.50.10860:FF:000001">
    <property type="entry name" value="Bifunctional protein FolD"/>
    <property type="match status" value="1"/>
</dbReference>
<dbReference type="FunFam" id="3.40.50.720:FF:000006">
    <property type="entry name" value="Bifunctional protein FolD"/>
    <property type="match status" value="1"/>
</dbReference>
<dbReference type="Gene3D" id="3.40.50.10860">
    <property type="entry name" value="Leucine Dehydrogenase, chain A, domain 1"/>
    <property type="match status" value="1"/>
</dbReference>
<dbReference type="Gene3D" id="3.40.50.720">
    <property type="entry name" value="NAD(P)-binding Rossmann-like Domain"/>
    <property type="match status" value="1"/>
</dbReference>
<dbReference type="HAMAP" id="MF_01576">
    <property type="entry name" value="THF_DHG_CYH"/>
    <property type="match status" value="1"/>
</dbReference>
<dbReference type="InterPro" id="IPR046346">
    <property type="entry name" value="Aminoacid_DH-like_N_sf"/>
</dbReference>
<dbReference type="InterPro" id="IPR036291">
    <property type="entry name" value="NAD(P)-bd_dom_sf"/>
</dbReference>
<dbReference type="InterPro" id="IPR000672">
    <property type="entry name" value="THF_DH/CycHdrlase"/>
</dbReference>
<dbReference type="InterPro" id="IPR020630">
    <property type="entry name" value="THF_DH/CycHdrlase_cat_dom"/>
</dbReference>
<dbReference type="InterPro" id="IPR020867">
    <property type="entry name" value="THF_DH/CycHdrlase_CS"/>
</dbReference>
<dbReference type="InterPro" id="IPR020631">
    <property type="entry name" value="THF_DH/CycHdrlase_NAD-bd_dom"/>
</dbReference>
<dbReference type="NCBIfam" id="NF008058">
    <property type="entry name" value="PRK10792.1"/>
    <property type="match status" value="1"/>
</dbReference>
<dbReference type="NCBIfam" id="NF010783">
    <property type="entry name" value="PRK14186.1"/>
    <property type="match status" value="1"/>
</dbReference>
<dbReference type="PANTHER" id="PTHR48099:SF5">
    <property type="entry name" value="C-1-TETRAHYDROFOLATE SYNTHASE, CYTOPLASMIC"/>
    <property type="match status" value="1"/>
</dbReference>
<dbReference type="PANTHER" id="PTHR48099">
    <property type="entry name" value="C-1-TETRAHYDROFOLATE SYNTHASE, CYTOPLASMIC-RELATED"/>
    <property type="match status" value="1"/>
</dbReference>
<dbReference type="Pfam" id="PF00763">
    <property type="entry name" value="THF_DHG_CYH"/>
    <property type="match status" value="1"/>
</dbReference>
<dbReference type="Pfam" id="PF02882">
    <property type="entry name" value="THF_DHG_CYH_C"/>
    <property type="match status" value="1"/>
</dbReference>
<dbReference type="PRINTS" id="PR00085">
    <property type="entry name" value="THFDHDRGNASE"/>
</dbReference>
<dbReference type="SUPFAM" id="SSF53223">
    <property type="entry name" value="Aminoacid dehydrogenase-like, N-terminal domain"/>
    <property type="match status" value="1"/>
</dbReference>
<dbReference type="SUPFAM" id="SSF51735">
    <property type="entry name" value="NAD(P)-binding Rossmann-fold domains"/>
    <property type="match status" value="1"/>
</dbReference>
<dbReference type="PROSITE" id="PS00766">
    <property type="entry name" value="THF_DHG_CYH_1"/>
    <property type="match status" value="1"/>
</dbReference>
<dbReference type="PROSITE" id="PS00767">
    <property type="entry name" value="THF_DHG_CYH_2"/>
    <property type="match status" value="1"/>
</dbReference>
<name>FOLD_CHRVO</name>
<feature type="chain" id="PRO_0000268313" description="Bifunctional protein FolD">
    <location>
        <begin position="1"/>
        <end position="283"/>
    </location>
</feature>
<feature type="binding site" evidence="1">
    <location>
        <begin position="166"/>
        <end position="168"/>
    </location>
    <ligand>
        <name>NADP(+)</name>
        <dbReference type="ChEBI" id="CHEBI:58349"/>
    </ligand>
</feature>
<feature type="binding site" evidence="1">
    <location>
        <position position="191"/>
    </location>
    <ligand>
        <name>NADP(+)</name>
        <dbReference type="ChEBI" id="CHEBI:58349"/>
    </ligand>
</feature>
<feature type="binding site" evidence="1">
    <location>
        <position position="232"/>
    </location>
    <ligand>
        <name>NADP(+)</name>
        <dbReference type="ChEBI" id="CHEBI:58349"/>
    </ligand>
</feature>
<protein>
    <recommendedName>
        <fullName evidence="1">Bifunctional protein FolD</fullName>
    </recommendedName>
    <domain>
        <recommendedName>
            <fullName evidence="1">Methylenetetrahydrofolate dehydrogenase</fullName>
            <ecNumber evidence="1">1.5.1.5</ecNumber>
        </recommendedName>
    </domain>
    <domain>
        <recommendedName>
            <fullName evidence="1">Methenyltetrahydrofolate cyclohydrolase</fullName>
            <ecNumber evidence="1">3.5.4.9</ecNumber>
        </recommendedName>
    </domain>
</protein>
<sequence>MSAQLIDGKAVAEKLLEKVSAGVGERLAQGKRAPALAVILVGDNPASAVYVGSKKKACEKAGIRSVAYDLPASTSQQQLLEIIDGLNADDAVDGILVQLPLPEQIDPQAVIERIDPKKDVDGFHPYNVGRLAIKMPLMRPCTPRGVMTLLEEYGIDPKGKKAVIVGASNIVGRPQALEMLLARATVTVCHSATRNLAEEVAAADILVVGVGIPNFVKGEWVKPGAVVIDVGINRLDTGKLCGDVEFDAARERAGFITPVPGGVGPMTVATLLQNTLDSANLNA</sequence>